<keyword id="KW-0903">Direct protein sequencing</keyword>
<keyword id="KW-0378">Hydrolase</keyword>
<keyword id="KW-0527">Neuropeptide</keyword>
<keyword id="KW-0645">Protease</keyword>
<keyword id="KW-0964">Secreted</keyword>
<keyword id="KW-0720">Serine protease</keyword>
<organism>
    <name type="scientific">Periplaneta americana</name>
    <name type="common">American cockroach</name>
    <name type="synonym">Blatta americana</name>
    <dbReference type="NCBI Taxonomy" id="6978"/>
    <lineage>
        <taxon>Eukaryota</taxon>
        <taxon>Metazoa</taxon>
        <taxon>Ecdysozoa</taxon>
        <taxon>Arthropoda</taxon>
        <taxon>Hexapoda</taxon>
        <taxon>Insecta</taxon>
        <taxon>Pterygota</taxon>
        <taxon>Neoptera</taxon>
        <taxon>Polyneoptera</taxon>
        <taxon>Dictyoptera</taxon>
        <taxon>Blattodea</taxon>
        <taxon>Blattoidea</taxon>
        <taxon>Blattidae</taxon>
        <taxon>Blattinae</taxon>
        <taxon>Periplaneta</taxon>
    </lineage>
</organism>
<protein>
    <recommendedName>
        <fullName>Proctolin</fullName>
    </recommendedName>
</protein>
<reference key="1">
    <citation type="journal article" date="1975" name="Life Sci.">
        <title>Structure of the pentapeptide proctolin, a proposed neurotransmitter in insects.</title>
        <authorList>
            <person name="Starratt A.N."/>
            <person name="Brown B.E."/>
        </authorList>
    </citation>
    <scope>PROTEIN SEQUENCE</scope>
</reference>
<reference key="2">
    <citation type="journal article" date="1981" name="Science">
        <title>Pentapeptide (proctolin) associated with an identified neuron.</title>
        <authorList>
            <person name="O'Shea M."/>
            <person name="Adams M.E."/>
        </authorList>
    </citation>
    <scope>TISSUE SPECIFICITY</scope>
</reference>
<reference key="3">
    <citation type="journal article" date="2016" name="Peptides">
        <title>[des-Arg(1)]-proctolin: a novel NEP-like enzyme inhibitor identified in Tityus serrulatus venom.</title>
        <authorList>
            <person name="Duzzi B."/>
            <person name="Cajado-Carvalho D."/>
            <person name="Kuniyoshi A.K."/>
            <person name="Kodama R.T."/>
            <person name="Gozzo F.C."/>
            <person name="Fioramonte M."/>
            <person name="Tambourgi D.V."/>
            <person name="Portaro F.V."/>
            <person name="Rioli V."/>
        </authorList>
    </citation>
    <scope>FUNCTION</scope>
    <scope>SYNTHESIS</scope>
    <source>
        <tissue>Venom</tissue>
    </source>
</reference>
<proteinExistence type="evidence at protein level"/>
<dbReference type="PIR" id="A01644">
    <property type="entry name" value="HOROHA"/>
</dbReference>
<dbReference type="GO" id="GO:0005576">
    <property type="term" value="C:extracellular region"/>
    <property type="evidence" value="ECO:0007669"/>
    <property type="project" value="UniProtKB-SubCell"/>
</dbReference>
<dbReference type="GO" id="GO:0008236">
    <property type="term" value="F:serine-type peptidase activity"/>
    <property type="evidence" value="ECO:0007669"/>
    <property type="project" value="UniProtKB-KW"/>
</dbReference>
<dbReference type="GO" id="GO:0007218">
    <property type="term" value="P:neuropeptide signaling pathway"/>
    <property type="evidence" value="ECO:0007669"/>
    <property type="project" value="UniProtKB-KW"/>
</dbReference>
<dbReference type="GO" id="GO:0006508">
    <property type="term" value="P:proteolysis"/>
    <property type="evidence" value="ECO:0007669"/>
    <property type="project" value="UniProtKB-KW"/>
</dbReference>
<evidence type="ECO:0000269" key="1">
    <source>
    </source>
</evidence>
<evidence type="ECO:0000269" key="2">
    <source>
    </source>
</evidence>
<evidence type="ECO:0000269" key="3">
    <source>
    </source>
</evidence>
<feature type="peptide" id="PRO_0000044211" description="Proctolin" evidence="2">
    <location>
        <begin position="1"/>
        <end position="5"/>
    </location>
</feature>
<name>PRCT_PERAM</name>
<accession>P67859</accession>
<accession>P01373</accession>
<sequence>RYLPT</sequence>
<comment type="function">
    <text evidence="1">Stimulates cardiac output and hindgut motility, modulates visceral and skeletal muscle in many arthropods. Also inhibits activities of the human peptidase neprilysin (NEP/MME) (PubMed:26056922).</text>
</comment>
<comment type="subcellular location">
    <subcellularLocation>
        <location>Secreted</location>
    </subcellularLocation>
</comment>
<comment type="tissue specificity">
    <text evidence="3">Found in the lateral white neurons.</text>
</comment>